<gene>
    <name evidence="1" type="primary">ybiX</name>
    <name type="ordered locus">SFV_0787</name>
</gene>
<accession>Q0T6F7</accession>
<comment type="cofactor">
    <cofactor evidence="1">
        <name>Fe(2+)</name>
        <dbReference type="ChEBI" id="CHEBI:29033"/>
    </cofactor>
    <text evidence="1">Binds 1 Fe(2+) ion per subunit.</text>
</comment>
<comment type="cofactor">
    <cofactor evidence="1">
        <name>L-ascorbate</name>
        <dbReference type="ChEBI" id="CHEBI:38290"/>
    </cofactor>
</comment>
<evidence type="ECO:0000255" key="1">
    <source>
        <dbReference type="HAMAP-Rule" id="MF_00657"/>
    </source>
</evidence>
<name>YBIX_SHIF8</name>
<feature type="chain" id="PRO_1000061743" description="PKHD-type hydroxylase YbiX">
    <location>
        <begin position="1"/>
        <end position="225"/>
    </location>
</feature>
<feature type="domain" description="Fe2OG dioxygenase" evidence="1">
    <location>
        <begin position="78"/>
        <end position="177"/>
    </location>
</feature>
<feature type="binding site" evidence="1">
    <location>
        <position position="96"/>
    </location>
    <ligand>
        <name>Fe cation</name>
        <dbReference type="ChEBI" id="CHEBI:24875"/>
    </ligand>
</feature>
<feature type="binding site" evidence="1">
    <location>
        <position position="98"/>
    </location>
    <ligand>
        <name>Fe cation</name>
        <dbReference type="ChEBI" id="CHEBI:24875"/>
    </ligand>
</feature>
<feature type="binding site" evidence="1">
    <location>
        <position position="158"/>
    </location>
    <ligand>
        <name>Fe cation</name>
        <dbReference type="ChEBI" id="CHEBI:24875"/>
    </ligand>
</feature>
<feature type="binding site" evidence="1">
    <location>
        <position position="168"/>
    </location>
    <ligand>
        <name>2-oxoglutarate</name>
        <dbReference type="ChEBI" id="CHEBI:16810"/>
    </ligand>
</feature>
<reference key="1">
    <citation type="journal article" date="2006" name="BMC Genomics">
        <title>Complete genome sequence of Shigella flexneri 5b and comparison with Shigella flexneri 2a.</title>
        <authorList>
            <person name="Nie H."/>
            <person name="Yang F."/>
            <person name="Zhang X."/>
            <person name="Yang J."/>
            <person name="Chen L."/>
            <person name="Wang J."/>
            <person name="Xiong Z."/>
            <person name="Peng J."/>
            <person name="Sun L."/>
            <person name="Dong J."/>
            <person name="Xue Y."/>
            <person name="Xu X."/>
            <person name="Chen S."/>
            <person name="Yao Z."/>
            <person name="Shen Y."/>
            <person name="Jin Q."/>
        </authorList>
    </citation>
    <scope>NUCLEOTIDE SEQUENCE [LARGE SCALE GENOMIC DNA]</scope>
    <source>
        <strain>8401</strain>
    </source>
</reference>
<proteinExistence type="inferred from homology"/>
<dbReference type="EC" id="1.14.11.-" evidence="1"/>
<dbReference type="EMBL" id="CP000266">
    <property type="protein sequence ID" value="ABF03019.1"/>
    <property type="molecule type" value="Genomic_DNA"/>
</dbReference>
<dbReference type="RefSeq" id="WP_000990151.1">
    <property type="nucleotide sequence ID" value="NC_008258.1"/>
</dbReference>
<dbReference type="SMR" id="Q0T6F7"/>
<dbReference type="KEGG" id="sfv:SFV_0787"/>
<dbReference type="HOGENOM" id="CLU_106663_0_0_6"/>
<dbReference type="Proteomes" id="UP000000659">
    <property type="component" value="Chromosome"/>
</dbReference>
<dbReference type="GO" id="GO:0016706">
    <property type="term" value="F:2-oxoglutarate-dependent dioxygenase activity"/>
    <property type="evidence" value="ECO:0007669"/>
    <property type="project" value="UniProtKB-UniRule"/>
</dbReference>
<dbReference type="GO" id="GO:0005506">
    <property type="term" value="F:iron ion binding"/>
    <property type="evidence" value="ECO:0007669"/>
    <property type="project" value="UniProtKB-UniRule"/>
</dbReference>
<dbReference type="GO" id="GO:0031418">
    <property type="term" value="F:L-ascorbic acid binding"/>
    <property type="evidence" value="ECO:0007669"/>
    <property type="project" value="UniProtKB-KW"/>
</dbReference>
<dbReference type="GO" id="GO:0006974">
    <property type="term" value="P:DNA damage response"/>
    <property type="evidence" value="ECO:0007669"/>
    <property type="project" value="TreeGrafter"/>
</dbReference>
<dbReference type="GO" id="GO:0006879">
    <property type="term" value="P:intracellular iron ion homeostasis"/>
    <property type="evidence" value="ECO:0007669"/>
    <property type="project" value="TreeGrafter"/>
</dbReference>
<dbReference type="FunFam" id="2.60.120.620:FF:000006">
    <property type="entry name" value="PKHD-type hydroxylase YbiX"/>
    <property type="match status" value="1"/>
</dbReference>
<dbReference type="FunFam" id="4.10.860.20:FF:000001">
    <property type="entry name" value="PKHD-type hydroxylase YbiX"/>
    <property type="match status" value="1"/>
</dbReference>
<dbReference type="Gene3D" id="2.60.120.620">
    <property type="entry name" value="q2cbj1_9rhob like domain"/>
    <property type="match status" value="1"/>
</dbReference>
<dbReference type="Gene3D" id="4.10.860.20">
    <property type="entry name" value="Rabenosyn, Rab binding domain"/>
    <property type="match status" value="1"/>
</dbReference>
<dbReference type="HAMAP" id="MF_00657">
    <property type="entry name" value="Hydroxyl_YbiX"/>
    <property type="match status" value="1"/>
</dbReference>
<dbReference type="InterPro" id="IPR005123">
    <property type="entry name" value="Oxoglu/Fe-dep_dioxygenase_dom"/>
</dbReference>
<dbReference type="InterPro" id="IPR041097">
    <property type="entry name" value="PKHD_C"/>
</dbReference>
<dbReference type="InterPro" id="IPR023550">
    <property type="entry name" value="PKHD_hydroxylase"/>
</dbReference>
<dbReference type="InterPro" id="IPR006620">
    <property type="entry name" value="Pro_4_hyd_alph"/>
</dbReference>
<dbReference type="InterPro" id="IPR044862">
    <property type="entry name" value="Pro_4_hyd_alph_FE2OG_OXY"/>
</dbReference>
<dbReference type="NCBIfam" id="NF003972">
    <property type="entry name" value="PRK05467.1-1"/>
    <property type="match status" value="1"/>
</dbReference>
<dbReference type="NCBIfam" id="NF003974">
    <property type="entry name" value="PRK05467.1-3"/>
    <property type="match status" value="1"/>
</dbReference>
<dbReference type="NCBIfam" id="NF003975">
    <property type="entry name" value="PRK05467.1-4"/>
    <property type="match status" value="1"/>
</dbReference>
<dbReference type="PANTHER" id="PTHR41536">
    <property type="entry name" value="PKHD-TYPE HYDROXYLASE YBIX"/>
    <property type="match status" value="1"/>
</dbReference>
<dbReference type="PANTHER" id="PTHR41536:SF1">
    <property type="entry name" value="PKHD-TYPE HYDROXYLASE YBIX"/>
    <property type="match status" value="1"/>
</dbReference>
<dbReference type="Pfam" id="PF13640">
    <property type="entry name" value="2OG-FeII_Oxy_3"/>
    <property type="match status" value="1"/>
</dbReference>
<dbReference type="Pfam" id="PF18331">
    <property type="entry name" value="PKHD_C"/>
    <property type="match status" value="1"/>
</dbReference>
<dbReference type="SMART" id="SM00702">
    <property type="entry name" value="P4Hc"/>
    <property type="match status" value="1"/>
</dbReference>
<dbReference type="SUPFAM" id="SSF51197">
    <property type="entry name" value="Clavaminate synthase-like"/>
    <property type="match status" value="1"/>
</dbReference>
<dbReference type="PROSITE" id="PS51471">
    <property type="entry name" value="FE2OG_OXY"/>
    <property type="match status" value="1"/>
</dbReference>
<sequence>MMYHIPGVLSPQDVAHFREQLEQAEWVDGRVTTGAQGAQVKNNQQVDTRSALYAALQNEVLNAVNQHALFFAAALPRTLSTPLFNRYQNNETYGFHVDGAVRSHPQNGWMRTDLSATLFLSDPQSYDGGELVVNDTFGQHRVKLPAGDLVLYPSSSLHCVTPVTRGVRVASFMWIQSMIRDDKKRAMLFELDKNIQSLKSRYGENEEILSLLNLYHNLLREWSEI</sequence>
<organism>
    <name type="scientific">Shigella flexneri serotype 5b (strain 8401)</name>
    <dbReference type="NCBI Taxonomy" id="373384"/>
    <lineage>
        <taxon>Bacteria</taxon>
        <taxon>Pseudomonadati</taxon>
        <taxon>Pseudomonadota</taxon>
        <taxon>Gammaproteobacteria</taxon>
        <taxon>Enterobacterales</taxon>
        <taxon>Enterobacteriaceae</taxon>
        <taxon>Shigella</taxon>
    </lineage>
</organism>
<keyword id="KW-0223">Dioxygenase</keyword>
<keyword id="KW-0408">Iron</keyword>
<keyword id="KW-0479">Metal-binding</keyword>
<keyword id="KW-0560">Oxidoreductase</keyword>
<keyword id="KW-0847">Vitamin C</keyword>
<protein>
    <recommendedName>
        <fullName evidence="1">PKHD-type hydroxylase YbiX</fullName>
        <ecNumber evidence="1">1.14.11.-</ecNumber>
    </recommendedName>
</protein>